<proteinExistence type="inferred from homology"/>
<dbReference type="EMBL" id="CP000046">
    <property type="protein sequence ID" value="AAW38410.1"/>
    <property type="molecule type" value="Genomic_DNA"/>
</dbReference>
<dbReference type="RefSeq" id="WP_001048816.1">
    <property type="nucleotide sequence ID" value="NZ_JBGOFO010000007.1"/>
</dbReference>
<dbReference type="SMR" id="Q5HE92"/>
<dbReference type="GeneID" id="98346415"/>
<dbReference type="KEGG" id="sac:SACOL2100"/>
<dbReference type="HOGENOM" id="CLU_148047_1_1_9"/>
<dbReference type="Proteomes" id="UP000000530">
    <property type="component" value="Chromosome"/>
</dbReference>
<dbReference type="GO" id="GO:0005886">
    <property type="term" value="C:plasma membrane"/>
    <property type="evidence" value="ECO:0007669"/>
    <property type="project" value="UniProtKB-SubCell"/>
</dbReference>
<dbReference type="GO" id="GO:0045259">
    <property type="term" value="C:proton-transporting ATP synthase complex"/>
    <property type="evidence" value="ECO:0007669"/>
    <property type="project" value="UniProtKB-KW"/>
</dbReference>
<dbReference type="GO" id="GO:0033177">
    <property type="term" value="C:proton-transporting two-sector ATPase complex, proton-transporting domain"/>
    <property type="evidence" value="ECO:0007669"/>
    <property type="project" value="InterPro"/>
</dbReference>
<dbReference type="GO" id="GO:0008289">
    <property type="term" value="F:lipid binding"/>
    <property type="evidence" value="ECO:0007669"/>
    <property type="project" value="UniProtKB-KW"/>
</dbReference>
<dbReference type="GO" id="GO:0046933">
    <property type="term" value="F:proton-transporting ATP synthase activity, rotational mechanism"/>
    <property type="evidence" value="ECO:0007669"/>
    <property type="project" value="UniProtKB-UniRule"/>
</dbReference>
<dbReference type="CDD" id="cd18185">
    <property type="entry name" value="ATP-synt_Fo_c_ATPE"/>
    <property type="match status" value="1"/>
</dbReference>
<dbReference type="FunFam" id="1.20.20.10:FF:000004">
    <property type="entry name" value="ATP synthase subunit c"/>
    <property type="match status" value="1"/>
</dbReference>
<dbReference type="Gene3D" id="1.20.20.10">
    <property type="entry name" value="F1F0 ATP synthase subunit C"/>
    <property type="match status" value="1"/>
</dbReference>
<dbReference type="HAMAP" id="MF_01396">
    <property type="entry name" value="ATP_synth_c_bact"/>
    <property type="match status" value="1"/>
</dbReference>
<dbReference type="InterPro" id="IPR005953">
    <property type="entry name" value="ATP_synth_csu_bac/chlpt"/>
</dbReference>
<dbReference type="InterPro" id="IPR000454">
    <property type="entry name" value="ATP_synth_F0_csu"/>
</dbReference>
<dbReference type="InterPro" id="IPR020537">
    <property type="entry name" value="ATP_synth_F0_csu_DDCD_BS"/>
</dbReference>
<dbReference type="InterPro" id="IPR038662">
    <property type="entry name" value="ATP_synth_F0_csu_sf"/>
</dbReference>
<dbReference type="InterPro" id="IPR002379">
    <property type="entry name" value="ATPase_proteolipid_c-like_dom"/>
</dbReference>
<dbReference type="InterPro" id="IPR035921">
    <property type="entry name" value="F/V-ATP_Csub_sf"/>
</dbReference>
<dbReference type="NCBIfam" id="TIGR01260">
    <property type="entry name" value="ATP_synt_c"/>
    <property type="match status" value="1"/>
</dbReference>
<dbReference type="NCBIfam" id="NF005363">
    <property type="entry name" value="PRK06876.1"/>
    <property type="match status" value="1"/>
</dbReference>
<dbReference type="Pfam" id="PF00137">
    <property type="entry name" value="ATP-synt_C"/>
    <property type="match status" value="1"/>
</dbReference>
<dbReference type="PRINTS" id="PR00124">
    <property type="entry name" value="ATPASEC"/>
</dbReference>
<dbReference type="SUPFAM" id="SSF81333">
    <property type="entry name" value="F1F0 ATP synthase subunit C"/>
    <property type="match status" value="1"/>
</dbReference>
<dbReference type="PROSITE" id="PS00605">
    <property type="entry name" value="ATPASE_C"/>
    <property type="match status" value="1"/>
</dbReference>
<comment type="function">
    <text evidence="1">F(1)F(0) ATP synthase produces ATP from ADP in the presence of a proton or sodium gradient. F-type ATPases consist of two structural domains, F(1) containing the extramembraneous catalytic core and F(0) containing the membrane proton channel, linked together by a central stalk and a peripheral stalk. During catalysis, ATP synthesis in the catalytic domain of F(1) is coupled via a rotary mechanism of the central stalk subunits to proton translocation.</text>
</comment>
<comment type="function">
    <text evidence="1">Key component of the F(0) channel; it plays a direct role in translocation across the membrane. A homomeric c-ring of between 10-14 subunits forms the central stalk rotor element with the F(1) delta and epsilon subunits.</text>
</comment>
<comment type="subunit">
    <text evidence="1">F-type ATPases have 2 components, F(1) - the catalytic core - and F(0) - the membrane proton channel. F(1) has five subunits: alpha(3), beta(3), gamma(1), delta(1), epsilon(1). F(0) has three main subunits: a(1), b(2) and c(10-14). The alpha and beta chains form an alternating ring which encloses part of the gamma chain. F(1) is attached to F(0) by a central stalk formed by the gamma and epsilon chains, while a peripheral stalk is formed by the delta and b chains.</text>
</comment>
<comment type="subcellular location">
    <subcellularLocation>
        <location evidence="1">Cell membrane</location>
        <topology evidence="1">Multi-pass membrane protein</topology>
    </subcellularLocation>
</comment>
<comment type="similarity">
    <text evidence="1">Belongs to the ATPase C chain family.</text>
</comment>
<keyword id="KW-0066">ATP synthesis</keyword>
<keyword id="KW-1003">Cell membrane</keyword>
<keyword id="KW-0138">CF(0)</keyword>
<keyword id="KW-0375">Hydrogen ion transport</keyword>
<keyword id="KW-0406">Ion transport</keyword>
<keyword id="KW-0446">Lipid-binding</keyword>
<keyword id="KW-0472">Membrane</keyword>
<keyword id="KW-0812">Transmembrane</keyword>
<keyword id="KW-1133">Transmembrane helix</keyword>
<keyword id="KW-0813">Transport</keyword>
<reference key="1">
    <citation type="journal article" date="2005" name="J. Bacteriol.">
        <title>Insights on evolution of virulence and resistance from the complete genome analysis of an early methicillin-resistant Staphylococcus aureus strain and a biofilm-producing methicillin-resistant Staphylococcus epidermidis strain.</title>
        <authorList>
            <person name="Gill S.R."/>
            <person name="Fouts D.E."/>
            <person name="Archer G.L."/>
            <person name="Mongodin E.F."/>
            <person name="DeBoy R.T."/>
            <person name="Ravel J."/>
            <person name="Paulsen I.T."/>
            <person name="Kolonay J.F."/>
            <person name="Brinkac L.M."/>
            <person name="Beanan M.J."/>
            <person name="Dodson R.J."/>
            <person name="Daugherty S.C."/>
            <person name="Madupu R."/>
            <person name="Angiuoli S.V."/>
            <person name="Durkin A.S."/>
            <person name="Haft D.H."/>
            <person name="Vamathevan J.J."/>
            <person name="Khouri H."/>
            <person name="Utterback T.R."/>
            <person name="Lee C."/>
            <person name="Dimitrov G."/>
            <person name="Jiang L."/>
            <person name="Qin H."/>
            <person name="Weidman J."/>
            <person name="Tran K."/>
            <person name="Kang K.H."/>
            <person name="Hance I.R."/>
            <person name="Nelson K.E."/>
            <person name="Fraser C.M."/>
        </authorList>
    </citation>
    <scope>NUCLEOTIDE SEQUENCE [LARGE SCALE GENOMIC DNA]</scope>
    <source>
        <strain>COL</strain>
    </source>
</reference>
<accession>Q5HE92</accession>
<evidence type="ECO:0000255" key="1">
    <source>
        <dbReference type="HAMAP-Rule" id="MF_01396"/>
    </source>
</evidence>
<protein>
    <recommendedName>
        <fullName evidence="1">ATP synthase subunit c</fullName>
    </recommendedName>
    <alternativeName>
        <fullName evidence="1">ATP synthase F(0) sector subunit c</fullName>
    </alternativeName>
    <alternativeName>
        <fullName evidence="1">F-type ATPase subunit c</fullName>
        <shortName evidence="1">F-ATPase subunit c</shortName>
    </alternativeName>
    <alternativeName>
        <fullName evidence="1">Lipid-binding protein</fullName>
    </alternativeName>
</protein>
<name>ATPL_STAAC</name>
<sequence length="70" mass="6979">MNLIAAAIAIGLSALGAGIGNGLIVSRTVEGVARQPEARGQLMGIMFIGVGLVEALPIIGVVIAFMTFAG</sequence>
<gene>
    <name evidence="1" type="primary">atpE</name>
    <name type="ordered locus">SACOL2100</name>
</gene>
<feature type="chain" id="PRO_1000184499" description="ATP synthase subunit c">
    <location>
        <begin position="1"/>
        <end position="70"/>
    </location>
</feature>
<feature type="transmembrane region" description="Helical" evidence="1">
    <location>
        <begin position="4"/>
        <end position="24"/>
    </location>
</feature>
<feature type="transmembrane region" description="Helical" evidence="1">
    <location>
        <begin position="45"/>
        <end position="65"/>
    </location>
</feature>
<feature type="site" description="Reversibly protonated during proton transport" evidence="1">
    <location>
        <position position="54"/>
    </location>
</feature>
<organism>
    <name type="scientific">Staphylococcus aureus (strain COL)</name>
    <dbReference type="NCBI Taxonomy" id="93062"/>
    <lineage>
        <taxon>Bacteria</taxon>
        <taxon>Bacillati</taxon>
        <taxon>Bacillota</taxon>
        <taxon>Bacilli</taxon>
        <taxon>Bacillales</taxon>
        <taxon>Staphylococcaceae</taxon>
        <taxon>Staphylococcus</taxon>
    </lineage>
</organism>